<proteinExistence type="inferred from homology"/>
<feature type="chain" id="PRO_1000015089" description="Small ribosomal subunit protein uS10">
    <location>
        <begin position="1"/>
        <end position="103"/>
    </location>
</feature>
<organism>
    <name type="scientific">Stutzerimonas stutzeri (strain A1501)</name>
    <name type="common">Pseudomonas stutzeri</name>
    <dbReference type="NCBI Taxonomy" id="379731"/>
    <lineage>
        <taxon>Bacteria</taxon>
        <taxon>Pseudomonadati</taxon>
        <taxon>Pseudomonadota</taxon>
        <taxon>Gammaproteobacteria</taxon>
        <taxon>Pseudomonadales</taxon>
        <taxon>Pseudomonadaceae</taxon>
        <taxon>Stutzerimonas</taxon>
    </lineage>
</organism>
<sequence>MQNQQIRIRLKAFDHRLIDQSTQEIVETAKRTGAQVRGPIPLPTRKERFTVLVSPHVNKDARDQYEIRTHKRVLDIVQPTDKTVDALMKLDLAAGVEVQISLG</sequence>
<keyword id="KW-1185">Reference proteome</keyword>
<keyword id="KW-0687">Ribonucleoprotein</keyword>
<keyword id="KW-0689">Ribosomal protein</keyword>
<name>RS10_STUS1</name>
<reference key="1">
    <citation type="journal article" date="2008" name="Proc. Natl. Acad. Sci. U.S.A.">
        <title>Nitrogen fixation island and rhizosphere competence traits in the genome of root-associated Pseudomonas stutzeri A1501.</title>
        <authorList>
            <person name="Yan Y."/>
            <person name="Yang J."/>
            <person name="Dou Y."/>
            <person name="Chen M."/>
            <person name="Ping S."/>
            <person name="Peng J."/>
            <person name="Lu W."/>
            <person name="Zhang W."/>
            <person name="Yao Z."/>
            <person name="Li H."/>
            <person name="Liu W."/>
            <person name="He S."/>
            <person name="Geng L."/>
            <person name="Zhang X."/>
            <person name="Yang F."/>
            <person name="Yu H."/>
            <person name="Zhan Y."/>
            <person name="Li D."/>
            <person name="Lin Z."/>
            <person name="Wang Y."/>
            <person name="Elmerich C."/>
            <person name="Lin M."/>
            <person name="Jin Q."/>
        </authorList>
    </citation>
    <scope>NUCLEOTIDE SEQUENCE [LARGE SCALE GENOMIC DNA]</scope>
    <source>
        <strain>A1501</strain>
    </source>
</reference>
<evidence type="ECO:0000255" key="1">
    <source>
        <dbReference type="HAMAP-Rule" id="MF_00508"/>
    </source>
</evidence>
<evidence type="ECO:0000305" key="2"/>
<accession>A4VHM9</accession>
<protein>
    <recommendedName>
        <fullName evidence="1">Small ribosomal subunit protein uS10</fullName>
    </recommendedName>
    <alternativeName>
        <fullName evidence="2">30S ribosomal protein S10</fullName>
    </alternativeName>
</protein>
<comment type="function">
    <text evidence="1">Involved in the binding of tRNA to the ribosomes.</text>
</comment>
<comment type="subunit">
    <text evidence="1">Part of the 30S ribosomal subunit.</text>
</comment>
<comment type="similarity">
    <text evidence="1">Belongs to the universal ribosomal protein uS10 family.</text>
</comment>
<gene>
    <name evidence="1" type="primary">rpsJ</name>
    <name type="ordered locus">PST_0783</name>
</gene>
<dbReference type="EMBL" id="CP000304">
    <property type="protein sequence ID" value="ABP78480.1"/>
    <property type="molecule type" value="Genomic_DNA"/>
</dbReference>
<dbReference type="RefSeq" id="WP_003186070.1">
    <property type="nucleotide sequence ID" value="NC_009434.1"/>
</dbReference>
<dbReference type="SMR" id="A4VHM9"/>
<dbReference type="GeneID" id="98636782"/>
<dbReference type="KEGG" id="psa:PST_0783"/>
<dbReference type="eggNOG" id="COG0051">
    <property type="taxonomic scope" value="Bacteria"/>
</dbReference>
<dbReference type="HOGENOM" id="CLU_122625_1_3_6"/>
<dbReference type="Proteomes" id="UP000000233">
    <property type="component" value="Chromosome"/>
</dbReference>
<dbReference type="GO" id="GO:1990904">
    <property type="term" value="C:ribonucleoprotein complex"/>
    <property type="evidence" value="ECO:0007669"/>
    <property type="project" value="UniProtKB-KW"/>
</dbReference>
<dbReference type="GO" id="GO:0005840">
    <property type="term" value="C:ribosome"/>
    <property type="evidence" value="ECO:0007669"/>
    <property type="project" value="UniProtKB-KW"/>
</dbReference>
<dbReference type="GO" id="GO:0003735">
    <property type="term" value="F:structural constituent of ribosome"/>
    <property type="evidence" value="ECO:0007669"/>
    <property type="project" value="InterPro"/>
</dbReference>
<dbReference type="GO" id="GO:0000049">
    <property type="term" value="F:tRNA binding"/>
    <property type="evidence" value="ECO:0007669"/>
    <property type="project" value="UniProtKB-UniRule"/>
</dbReference>
<dbReference type="GO" id="GO:0006412">
    <property type="term" value="P:translation"/>
    <property type="evidence" value="ECO:0007669"/>
    <property type="project" value="UniProtKB-UniRule"/>
</dbReference>
<dbReference type="FunFam" id="3.30.70.600:FF:000001">
    <property type="entry name" value="30S ribosomal protein S10"/>
    <property type="match status" value="1"/>
</dbReference>
<dbReference type="Gene3D" id="3.30.70.600">
    <property type="entry name" value="Ribosomal protein S10 domain"/>
    <property type="match status" value="1"/>
</dbReference>
<dbReference type="HAMAP" id="MF_00508">
    <property type="entry name" value="Ribosomal_uS10"/>
    <property type="match status" value="1"/>
</dbReference>
<dbReference type="InterPro" id="IPR001848">
    <property type="entry name" value="Ribosomal_uS10"/>
</dbReference>
<dbReference type="InterPro" id="IPR018268">
    <property type="entry name" value="Ribosomal_uS10_CS"/>
</dbReference>
<dbReference type="InterPro" id="IPR027486">
    <property type="entry name" value="Ribosomal_uS10_dom"/>
</dbReference>
<dbReference type="InterPro" id="IPR036838">
    <property type="entry name" value="Ribosomal_uS10_dom_sf"/>
</dbReference>
<dbReference type="NCBIfam" id="NF001861">
    <property type="entry name" value="PRK00596.1"/>
    <property type="match status" value="1"/>
</dbReference>
<dbReference type="NCBIfam" id="TIGR01049">
    <property type="entry name" value="rpsJ_bact"/>
    <property type="match status" value="1"/>
</dbReference>
<dbReference type="PANTHER" id="PTHR11700">
    <property type="entry name" value="30S RIBOSOMAL PROTEIN S10 FAMILY MEMBER"/>
    <property type="match status" value="1"/>
</dbReference>
<dbReference type="Pfam" id="PF00338">
    <property type="entry name" value="Ribosomal_S10"/>
    <property type="match status" value="1"/>
</dbReference>
<dbReference type="PRINTS" id="PR00971">
    <property type="entry name" value="RIBOSOMALS10"/>
</dbReference>
<dbReference type="SMART" id="SM01403">
    <property type="entry name" value="Ribosomal_S10"/>
    <property type="match status" value="1"/>
</dbReference>
<dbReference type="SUPFAM" id="SSF54999">
    <property type="entry name" value="Ribosomal protein S10"/>
    <property type="match status" value="1"/>
</dbReference>
<dbReference type="PROSITE" id="PS00361">
    <property type="entry name" value="RIBOSOMAL_S10"/>
    <property type="match status" value="1"/>
</dbReference>